<protein>
    <recommendedName>
        <fullName>Uncharacterized protein MPN_312</fullName>
    </recommendedName>
</protein>
<name>Y312_MYCPN</name>
<organism>
    <name type="scientific">Mycoplasma pneumoniae (strain ATCC 29342 / M129 / Subtype 1)</name>
    <name type="common">Mycoplasmoides pneumoniae</name>
    <dbReference type="NCBI Taxonomy" id="272634"/>
    <lineage>
        <taxon>Bacteria</taxon>
        <taxon>Bacillati</taxon>
        <taxon>Mycoplasmatota</taxon>
        <taxon>Mycoplasmoidales</taxon>
        <taxon>Mycoplasmoidaceae</taxon>
        <taxon>Mycoplasmoides</taxon>
    </lineage>
</organism>
<keyword id="KW-1185">Reference proteome</keyword>
<accession>P75469</accession>
<accession>O08090</accession>
<proteinExistence type="predicted"/>
<reference key="1">
    <citation type="journal article" date="1996" name="Nucleic Acids Res.">
        <title>Complete sequence analysis of the genome of the bacterium Mycoplasma pneumoniae.</title>
        <authorList>
            <person name="Himmelreich R."/>
            <person name="Hilbert H."/>
            <person name="Plagens H."/>
            <person name="Pirkl E."/>
            <person name="Li B.-C."/>
            <person name="Herrmann R."/>
        </authorList>
    </citation>
    <scope>NUCLEOTIDE SEQUENCE [LARGE SCALE GENOMIC DNA]</scope>
    <source>
        <strain>ATCC 29342 / M129 / Subtype 1</strain>
    </source>
</reference>
<reference key="2">
    <citation type="journal article" date="1997" name="J. Bacteriol.">
        <title>Transposon mutagenesis reinforces the correlation between Mycoplasma pneumoniae cytoskeletal protein HMW2 and cytadherence.</title>
        <authorList>
            <person name="Krause D.C."/>
            <person name="Proft T."/>
            <person name="Hedreyda C.T."/>
            <person name="Hilbert H."/>
            <person name="Plagens H."/>
            <person name="Herrmann R."/>
        </authorList>
    </citation>
    <scope>NUCLEOTIDE SEQUENCE [GENOMIC DNA]</scope>
    <source>
        <strain>ATCC 29342 / M129 / Subtype 1</strain>
    </source>
</reference>
<gene>
    <name type="ordered locus">MPN_312</name>
    <name type="ORF">F10_orf218</name>
    <name type="ORF">MP524</name>
</gene>
<sequence>MKDSALTLKRVRIGKFSESMVEERPTLNLFEKVEFNPVPTALVDQLPTEPLVEATLLEKEAITFVDTYATSEAHDQIATFVLEQSMETEVVEKEAIETAIVAPAPDLVEEKAVLVEEVLVEPTATEAVTTEENQVSTTSVTKIKTKRSNTKKVTSETLVASKSVKTKKLITPNRVSSGNVNITLWQVDKKSTNLTKTKTDLFGKKHQFKGPQLISYKK</sequence>
<dbReference type="EMBL" id="U00089">
    <property type="protein sequence ID" value="AAB96172.1"/>
    <property type="molecule type" value="Genomic_DNA"/>
</dbReference>
<dbReference type="EMBL" id="U59896">
    <property type="protein sequence ID" value="AAB52529.1"/>
    <property type="molecule type" value="Genomic_DNA"/>
</dbReference>
<dbReference type="PIR" id="S73850">
    <property type="entry name" value="S73850"/>
</dbReference>
<dbReference type="RefSeq" id="NP_110000.1">
    <property type="nucleotide sequence ID" value="NC_000912.1"/>
</dbReference>
<dbReference type="RefSeq" id="WP_010874668.1">
    <property type="nucleotide sequence ID" value="NZ_OU342337.1"/>
</dbReference>
<dbReference type="STRING" id="272634.MPN_312"/>
<dbReference type="EnsemblBacteria" id="AAB96172">
    <property type="protein sequence ID" value="AAB96172"/>
    <property type="gene ID" value="MPN_312"/>
</dbReference>
<dbReference type="KEGG" id="mpn:MPN_312"/>
<dbReference type="PATRIC" id="fig|272634.6.peg.336"/>
<dbReference type="HOGENOM" id="CLU_1265792_0_0_14"/>
<dbReference type="BioCyc" id="MPNE272634:G1GJ3-498-MONOMER"/>
<dbReference type="Proteomes" id="UP000000808">
    <property type="component" value="Chromosome"/>
</dbReference>
<feature type="chain" id="PRO_0000210660" description="Uncharacterized protein MPN_312">
    <location>
        <begin position="1"/>
        <end position="218"/>
    </location>
</feature>